<name>FOLD_PEDPA</name>
<protein>
    <recommendedName>
        <fullName evidence="1">Bifunctional protein FolD</fullName>
    </recommendedName>
    <domain>
        <recommendedName>
            <fullName evidence="1">Methylenetetrahydrofolate dehydrogenase</fullName>
            <ecNumber evidence="1">1.5.1.5</ecNumber>
        </recommendedName>
    </domain>
    <domain>
        <recommendedName>
            <fullName evidence="1">Methenyltetrahydrofolate cyclohydrolase</fullName>
            <ecNumber evidence="1">3.5.4.9</ecNumber>
        </recommendedName>
    </domain>
</protein>
<evidence type="ECO:0000255" key="1">
    <source>
        <dbReference type="HAMAP-Rule" id="MF_01576"/>
    </source>
</evidence>
<sequence length="283" mass="31039">MGQIIDGKTLAAEIDKQTMTEVQKLKNQGVEPHLVVVLVGENPASQIYVRNKEKRANKLGIKSTLVTMNADISENELLLKIQELNQTEDVNAILVQMPLPKHIDAFKVTMAIDPRKDVDGFHPVNVGKLFEGKTQHTPIACTPQGIMEMFQKYHIDIQGKRAVVVGRSSIVGKPMAALLLNANATVTLAHSYTKNLAALTKEADILVVATGIAHFIKEDQVKEGAVVIDVGMDRDENGKLTGDVDFENVEKHVSYITPVPKGVGPMTISMLMKQTVNLTKWSI</sequence>
<accession>Q03FZ5</accession>
<gene>
    <name evidence="1" type="primary">folD</name>
    <name type="ordered locus">PEPE_0817</name>
</gene>
<dbReference type="EC" id="1.5.1.5" evidence="1"/>
<dbReference type="EC" id="3.5.4.9" evidence="1"/>
<dbReference type="EMBL" id="CP000422">
    <property type="protein sequence ID" value="ABJ67877.1"/>
    <property type="molecule type" value="Genomic_DNA"/>
</dbReference>
<dbReference type="RefSeq" id="WP_002833545.1">
    <property type="nucleotide sequence ID" value="NC_008525.1"/>
</dbReference>
<dbReference type="SMR" id="Q03FZ5"/>
<dbReference type="STRING" id="278197.PEPE_0817"/>
<dbReference type="GeneID" id="33061855"/>
<dbReference type="KEGG" id="ppe:PEPE_0817"/>
<dbReference type="eggNOG" id="COG0190">
    <property type="taxonomic scope" value="Bacteria"/>
</dbReference>
<dbReference type="HOGENOM" id="CLU_034045_2_1_9"/>
<dbReference type="OrthoDB" id="9803580at2"/>
<dbReference type="UniPathway" id="UPA00193"/>
<dbReference type="Proteomes" id="UP000000773">
    <property type="component" value="Chromosome"/>
</dbReference>
<dbReference type="GO" id="GO:0005829">
    <property type="term" value="C:cytosol"/>
    <property type="evidence" value="ECO:0007669"/>
    <property type="project" value="TreeGrafter"/>
</dbReference>
<dbReference type="GO" id="GO:0004477">
    <property type="term" value="F:methenyltetrahydrofolate cyclohydrolase activity"/>
    <property type="evidence" value="ECO:0007669"/>
    <property type="project" value="UniProtKB-UniRule"/>
</dbReference>
<dbReference type="GO" id="GO:0004488">
    <property type="term" value="F:methylenetetrahydrofolate dehydrogenase (NADP+) activity"/>
    <property type="evidence" value="ECO:0007669"/>
    <property type="project" value="UniProtKB-UniRule"/>
</dbReference>
<dbReference type="GO" id="GO:0000105">
    <property type="term" value="P:L-histidine biosynthetic process"/>
    <property type="evidence" value="ECO:0007669"/>
    <property type="project" value="UniProtKB-KW"/>
</dbReference>
<dbReference type="GO" id="GO:0009086">
    <property type="term" value="P:methionine biosynthetic process"/>
    <property type="evidence" value="ECO:0007669"/>
    <property type="project" value="UniProtKB-KW"/>
</dbReference>
<dbReference type="GO" id="GO:0006164">
    <property type="term" value="P:purine nucleotide biosynthetic process"/>
    <property type="evidence" value="ECO:0007669"/>
    <property type="project" value="UniProtKB-KW"/>
</dbReference>
<dbReference type="GO" id="GO:0035999">
    <property type="term" value="P:tetrahydrofolate interconversion"/>
    <property type="evidence" value="ECO:0007669"/>
    <property type="project" value="UniProtKB-UniRule"/>
</dbReference>
<dbReference type="CDD" id="cd01080">
    <property type="entry name" value="NAD_bind_m-THF_DH_Cyclohyd"/>
    <property type="match status" value="1"/>
</dbReference>
<dbReference type="FunFam" id="3.40.50.720:FF:000094">
    <property type="entry name" value="Bifunctional protein FolD"/>
    <property type="match status" value="1"/>
</dbReference>
<dbReference type="FunFam" id="3.40.50.10860:FF:000005">
    <property type="entry name" value="C-1-tetrahydrofolate synthase, cytoplasmic, putative"/>
    <property type="match status" value="1"/>
</dbReference>
<dbReference type="Gene3D" id="3.40.50.10860">
    <property type="entry name" value="Leucine Dehydrogenase, chain A, domain 1"/>
    <property type="match status" value="1"/>
</dbReference>
<dbReference type="Gene3D" id="3.40.50.720">
    <property type="entry name" value="NAD(P)-binding Rossmann-like Domain"/>
    <property type="match status" value="1"/>
</dbReference>
<dbReference type="HAMAP" id="MF_01576">
    <property type="entry name" value="THF_DHG_CYH"/>
    <property type="match status" value="1"/>
</dbReference>
<dbReference type="InterPro" id="IPR046346">
    <property type="entry name" value="Aminoacid_DH-like_N_sf"/>
</dbReference>
<dbReference type="InterPro" id="IPR036291">
    <property type="entry name" value="NAD(P)-bd_dom_sf"/>
</dbReference>
<dbReference type="InterPro" id="IPR000672">
    <property type="entry name" value="THF_DH/CycHdrlase"/>
</dbReference>
<dbReference type="InterPro" id="IPR020630">
    <property type="entry name" value="THF_DH/CycHdrlase_cat_dom"/>
</dbReference>
<dbReference type="InterPro" id="IPR020867">
    <property type="entry name" value="THF_DH/CycHdrlase_CS"/>
</dbReference>
<dbReference type="InterPro" id="IPR020631">
    <property type="entry name" value="THF_DH/CycHdrlase_NAD-bd_dom"/>
</dbReference>
<dbReference type="NCBIfam" id="NF010783">
    <property type="entry name" value="PRK14186.1"/>
    <property type="match status" value="1"/>
</dbReference>
<dbReference type="PANTHER" id="PTHR48099:SF5">
    <property type="entry name" value="C-1-TETRAHYDROFOLATE SYNTHASE, CYTOPLASMIC"/>
    <property type="match status" value="1"/>
</dbReference>
<dbReference type="PANTHER" id="PTHR48099">
    <property type="entry name" value="C-1-TETRAHYDROFOLATE SYNTHASE, CYTOPLASMIC-RELATED"/>
    <property type="match status" value="1"/>
</dbReference>
<dbReference type="Pfam" id="PF00763">
    <property type="entry name" value="THF_DHG_CYH"/>
    <property type="match status" value="1"/>
</dbReference>
<dbReference type="Pfam" id="PF02882">
    <property type="entry name" value="THF_DHG_CYH_C"/>
    <property type="match status" value="1"/>
</dbReference>
<dbReference type="PRINTS" id="PR00085">
    <property type="entry name" value="THFDHDRGNASE"/>
</dbReference>
<dbReference type="SUPFAM" id="SSF53223">
    <property type="entry name" value="Aminoacid dehydrogenase-like, N-terminal domain"/>
    <property type="match status" value="1"/>
</dbReference>
<dbReference type="SUPFAM" id="SSF51735">
    <property type="entry name" value="NAD(P)-binding Rossmann-fold domains"/>
    <property type="match status" value="1"/>
</dbReference>
<dbReference type="PROSITE" id="PS00767">
    <property type="entry name" value="THF_DHG_CYH_2"/>
    <property type="match status" value="1"/>
</dbReference>
<organism>
    <name type="scientific">Pediococcus pentosaceus (strain ATCC 25745 / CCUG 21536 / LMG 10740 / 183-1w)</name>
    <dbReference type="NCBI Taxonomy" id="278197"/>
    <lineage>
        <taxon>Bacteria</taxon>
        <taxon>Bacillati</taxon>
        <taxon>Bacillota</taxon>
        <taxon>Bacilli</taxon>
        <taxon>Lactobacillales</taxon>
        <taxon>Lactobacillaceae</taxon>
        <taxon>Pediococcus</taxon>
    </lineage>
</organism>
<comment type="function">
    <text evidence="1">Catalyzes the oxidation of 5,10-methylenetetrahydrofolate to 5,10-methenyltetrahydrofolate and then the hydrolysis of 5,10-methenyltetrahydrofolate to 10-formyltetrahydrofolate.</text>
</comment>
<comment type="catalytic activity">
    <reaction evidence="1">
        <text>(6R)-5,10-methylene-5,6,7,8-tetrahydrofolate + NADP(+) = (6R)-5,10-methenyltetrahydrofolate + NADPH</text>
        <dbReference type="Rhea" id="RHEA:22812"/>
        <dbReference type="ChEBI" id="CHEBI:15636"/>
        <dbReference type="ChEBI" id="CHEBI:57455"/>
        <dbReference type="ChEBI" id="CHEBI:57783"/>
        <dbReference type="ChEBI" id="CHEBI:58349"/>
        <dbReference type="EC" id="1.5.1.5"/>
    </reaction>
</comment>
<comment type="catalytic activity">
    <reaction evidence="1">
        <text>(6R)-5,10-methenyltetrahydrofolate + H2O = (6R)-10-formyltetrahydrofolate + H(+)</text>
        <dbReference type="Rhea" id="RHEA:23700"/>
        <dbReference type="ChEBI" id="CHEBI:15377"/>
        <dbReference type="ChEBI" id="CHEBI:15378"/>
        <dbReference type="ChEBI" id="CHEBI:57455"/>
        <dbReference type="ChEBI" id="CHEBI:195366"/>
        <dbReference type="EC" id="3.5.4.9"/>
    </reaction>
</comment>
<comment type="pathway">
    <text evidence="1">One-carbon metabolism; tetrahydrofolate interconversion.</text>
</comment>
<comment type="subunit">
    <text evidence="1">Homodimer.</text>
</comment>
<comment type="similarity">
    <text evidence="1">Belongs to the tetrahydrofolate dehydrogenase/cyclohydrolase family.</text>
</comment>
<feature type="chain" id="PRO_0000305858" description="Bifunctional protein FolD">
    <location>
        <begin position="1"/>
        <end position="283"/>
    </location>
</feature>
<feature type="binding site" evidence="1">
    <location>
        <begin position="166"/>
        <end position="168"/>
    </location>
    <ligand>
        <name>NADP(+)</name>
        <dbReference type="ChEBI" id="CHEBI:58349"/>
    </ligand>
</feature>
<feature type="binding site" evidence="1">
    <location>
        <position position="191"/>
    </location>
    <ligand>
        <name>NADP(+)</name>
        <dbReference type="ChEBI" id="CHEBI:58349"/>
    </ligand>
</feature>
<reference key="1">
    <citation type="journal article" date="2006" name="Proc. Natl. Acad. Sci. U.S.A.">
        <title>Comparative genomics of the lactic acid bacteria.</title>
        <authorList>
            <person name="Makarova K.S."/>
            <person name="Slesarev A."/>
            <person name="Wolf Y.I."/>
            <person name="Sorokin A."/>
            <person name="Mirkin B."/>
            <person name="Koonin E.V."/>
            <person name="Pavlov A."/>
            <person name="Pavlova N."/>
            <person name="Karamychev V."/>
            <person name="Polouchine N."/>
            <person name="Shakhova V."/>
            <person name="Grigoriev I."/>
            <person name="Lou Y."/>
            <person name="Rohksar D."/>
            <person name="Lucas S."/>
            <person name="Huang K."/>
            <person name="Goodstein D.M."/>
            <person name="Hawkins T."/>
            <person name="Plengvidhya V."/>
            <person name="Welker D."/>
            <person name="Hughes J."/>
            <person name="Goh Y."/>
            <person name="Benson A."/>
            <person name="Baldwin K."/>
            <person name="Lee J.-H."/>
            <person name="Diaz-Muniz I."/>
            <person name="Dosti B."/>
            <person name="Smeianov V."/>
            <person name="Wechter W."/>
            <person name="Barabote R."/>
            <person name="Lorca G."/>
            <person name="Altermann E."/>
            <person name="Barrangou R."/>
            <person name="Ganesan B."/>
            <person name="Xie Y."/>
            <person name="Rawsthorne H."/>
            <person name="Tamir D."/>
            <person name="Parker C."/>
            <person name="Breidt F."/>
            <person name="Broadbent J.R."/>
            <person name="Hutkins R."/>
            <person name="O'Sullivan D."/>
            <person name="Steele J."/>
            <person name="Unlu G."/>
            <person name="Saier M.H. Jr."/>
            <person name="Klaenhammer T."/>
            <person name="Richardson P."/>
            <person name="Kozyavkin S."/>
            <person name="Weimer B.C."/>
            <person name="Mills D.A."/>
        </authorList>
    </citation>
    <scope>NUCLEOTIDE SEQUENCE [LARGE SCALE GENOMIC DNA]</scope>
    <source>
        <strain>ATCC 25745 / CCUG 21536 / LMG 10740 / 183-1w</strain>
    </source>
</reference>
<keyword id="KW-0028">Amino-acid biosynthesis</keyword>
<keyword id="KW-0368">Histidine biosynthesis</keyword>
<keyword id="KW-0378">Hydrolase</keyword>
<keyword id="KW-0486">Methionine biosynthesis</keyword>
<keyword id="KW-0511">Multifunctional enzyme</keyword>
<keyword id="KW-0521">NADP</keyword>
<keyword id="KW-0554">One-carbon metabolism</keyword>
<keyword id="KW-0560">Oxidoreductase</keyword>
<keyword id="KW-0658">Purine biosynthesis</keyword>
<proteinExistence type="inferred from homology"/>